<sequence>MQVTDVRIRRVTAEGKMKAIVSVTFDDEFVVHDIKIIEGQNGLFIAMPSRKMGEGDFRDIAHPINSSTRTKLQDAIFAEYEKMSDMEEEAANE</sequence>
<protein>
    <recommendedName>
        <fullName evidence="1">Putative septation protein SpoVG</fullName>
    </recommendedName>
</protein>
<reference key="1">
    <citation type="submission" date="2007-10" db="EMBL/GenBank/DDBJ databases">
        <title>Complete genome of Alkaliphilus oremlandii OhILAs.</title>
        <authorList>
            <person name="Copeland A."/>
            <person name="Lucas S."/>
            <person name="Lapidus A."/>
            <person name="Barry K."/>
            <person name="Detter J.C."/>
            <person name="Glavina del Rio T."/>
            <person name="Hammon N."/>
            <person name="Israni S."/>
            <person name="Dalin E."/>
            <person name="Tice H."/>
            <person name="Pitluck S."/>
            <person name="Chain P."/>
            <person name="Malfatti S."/>
            <person name="Shin M."/>
            <person name="Vergez L."/>
            <person name="Schmutz J."/>
            <person name="Larimer F."/>
            <person name="Land M."/>
            <person name="Hauser L."/>
            <person name="Kyrpides N."/>
            <person name="Mikhailova N."/>
            <person name="Stolz J.F."/>
            <person name="Dawson A."/>
            <person name="Fisher E."/>
            <person name="Crable B."/>
            <person name="Perera E."/>
            <person name="Lisak J."/>
            <person name="Ranganathan M."/>
            <person name="Basu P."/>
            <person name="Richardson P."/>
        </authorList>
    </citation>
    <scope>NUCLEOTIDE SEQUENCE [LARGE SCALE GENOMIC DNA]</scope>
    <source>
        <strain>OhILAs</strain>
    </source>
</reference>
<organism>
    <name type="scientific">Alkaliphilus oremlandii (strain OhILAs)</name>
    <name type="common">Clostridium oremlandii (strain OhILAs)</name>
    <dbReference type="NCBI Taxonomy" id="350688"/>
    <lineage>
        <taxon>Bacteria</taxon>
        <taxon>Bacillati</taxon>
        <taxon>Bacillota</taxon>
        <taxon>Clostridia</taxon>
        <taxon>Peptostreptococcales</taxon>
        <taxon>Natronincolaceae</taxon>
        <taxon>Alkaliphilus</taxon>
    </lineage>
</organism>
<accession>A8MK46</accession>
<evidence type="ECO:0000255" key="1">
    <source>
        <dbReference type="HAMAP-Rule" id="MF_00819"/>
    </source>
</evidence>
<name>SP5G_ALKOO</name>
<dbReference type="EMBL" id="CP000853">
    <property type="protein sequence ID" value="ABW20178.1"/>
    <property type="molecule type" value="Genomic_DNA"/>
</dbReference>
<dbReference type="RefSeq" id="WP_012160485.1">
    <property type="nucleotide sequence ID" value="NC_009922.1"/>
</dbReference>
<dbReference type="SMR" id="A8MK46"/>
<dbReference type="STRING" id="350688.Clos_2647"/>
<dbReference type="KEGG" id="aoe:Clos_2647"/>
<dbReference type="eggNOG" id="COG2088">
    <property type="taxonomic scope" value="Bacteria"/>
</dbReference>
<dbReference type="HOGENOM" id="CLU_103669_2_1_9"/>
<dbReference type="OrthoDB" id="9796286at2"/>
<dbReference type="Proteomes" id="UP000000269">
    <property type="component" value="Chromosome"/>
</dbReference>
<dbReference type="GO" id="GO:0000917">
    <property type="term" value="P:division septum assembly"/>
    <property type="evidence" value="ECO:0007669"/>
    <property type="project" value="UniProtKB-KW"/>
</dbReference>
<dbReference type="GO" id="GO:0030435">
    <property type="term" value="P:sporulation resulting in formation of a cellular spore"/>
    <property type="evidence" value="ECO:0007669"/>
    <property type="project" value="InterPro"/>
</dbReference>
<dbReference type="Gene3D" id="3.30.1120.40">
    <property type="entry name" value="Stage V sporulation protein G"/>
    <property type="match status" value="1"/>
</dbReference>
<dbReference type="HAMAP" id="MF_00819">
    <property type="entry name" value="SpoVG"/>
    <property type="match status" value="1"/>
</dbReference>
<dbReference type="InterPro" id="IPR007170">
    <property type="entry name" value="SpoVG"/>
</dbReference>
<dbReference type="InterPro" id="IPR036751">
    <property type="entry name" value="SpoVG_sf"/>
</dbReference>
<dbReference type="NCBIfam" id="NF009749">
    <property type="entry name" value="PRK13259.1"/>
    <property type="match status" value="1"/>
</dbReference>
<dbReference type="PANTHER" id="PTHR38429">
    <property type="entry name" value="SEPTATION PROTEIN SPOVG-RELATED"/>
    <property type="match status" value="1"/>
</dbReference>
<dbReference type="PANTHER" id="PTHR38429:SF1">
    <property type="entry name" value="SEPTATION PROTEIN SPOVG-RELATED"/>
    <property type="match status" value="1"/>
</dbReference>
<dbReference type="Pfam" id="PF04026">
    <property type="entry name" value="SpoVG"/>
    <property type="match status" value="1"/>
</dbReference>
<dbReference type="SUPFAM" id="SSF160537">
    <property type="entry name" value="SpoVG-like"/>
    <property type="match status" value="1"/>
</dbReference>
<feature type="chain" id="PRO_1000062417" description="Putative septation protein SpoVG">
    <location>
        <begin position="1"/>
        <end position="93"/>
    </location>
</feature>
<gene>
    <name evidence="1" type="primary">spoVG</name>
    <name type="ordered locus">Clos_2647</name>
</gene>
<keyword id="KW-0131">Cell cycle</keyword>
<keyword id="KW-0132">Cell division</keyword>
<keyword id="KW-1185">Reference proteome</keyword>
<keyword id="KW-0717">Septation</keyword>
<proteinExistence type="inferred from homology"/>
<comment type="function">
    <text evidence="1">Could be involved in septation.</text>
</comment>
<comment type="similarity">
    <text evidence="1">Belongs to the SpoVG family.</text>
</comment>